<dbReference type="EMBL" id="AE000513">
    <property type="protein sequence ID" value="AAF10282.1"/>
    <property type="molecule type" value="Genomic_DNA"/>
</dbReference>
<dbReference type="PIR" id="C75485">
    <property type="entry name" value="C75485"/>
</dbReference>
<dbReference type="RefSeq" id="NP_294425.1">
    <property type="nucleotide sequence ID" value="NC_001263.1"/>
</dbReference>
<dbReference type="RefSeq" id="WP_010887347.1">
    <property type="nucleotide sequence ID" value="NC_001263.1"/>
</dbReference>
<dbReference type="SMR" id="Q9RWG6"/>
<dbReference type="STRING" id="243230.DR_0702"/>
<dbReference type="PaxDb" id="243230-DR_0702"/>
<dbReference type="EnsemblBacteria" id="AAF10282">
    <property type="protein sequence ID" value="AAF10282"/>
    <property type="gene ID" value="DR_0702"/>
</dbReference>
<dbReference type="GeneID" id="69516949"/>
<dbReference type="KEGG" id="dra:DR_0702"/>
<dbReference type="PATRIC" id="fig|243230.17.peg.880"/>
<dbReference type="eggNOG" id="COG1394">
    <property type="taxonomic scope" value="Bacteria"/>
</dbReference>
<dbReference type="HOGENOM" id="CLU_069688_2_1_0"/>
<dbReference type="InParanoid" id="Q9RWG6"/>
<dbReference type="OrthoDB" id="9781718at2"/>
<dbReference type="Proteomes" id="UP000002524">
    <property type="component" value="Chromosome 1"/>
</dbReference>
<dbReference type="GO" id="GO:0033176">
    <property type="term" value="C:proton-transporting V-type ATPase complex"/>
    <property type="evidence" value="ECO:0000318"/>
    <property type="project" value="GO_Central"/>
</dbReference>
<dbReference type="GO" id="GO:0005524">
    <property type="term" value="F:ATP binding"/>
    <property type="evidence" value="ECO:0007669"/>
    <property type="project" value="UniProtKB-UniRule"/>
</dbReference>
<dbReference type="GO" id="GO:0046933">
    <property type="term" value="F:proton-transporting ATP synthase activity, rotational mechanism"/>
    <property type="evidence" value="ECO:0007669"/>
    <property type="project" value="UniProtKB-UniRule"/>
</dbReference>
<dbReference type="GO" id="GO:0046961">
    <property type="term" value="F:proton-transporting ATPase activity, rotational mechanism"/>
    <property type="evidence" value="ECO:0007669"/>
    <property type="project" value="InterPro"/>
</dbReference>
<dbReference type="GO" id="GO:0042777">
    <property type="term" value="P:proton motive force-driven plasma membrane ATP synthesis"/>
    <property type="evidence" value="ECO:0007669"/>
    <property type="project" value="UniProtKB-UniRule"/>
</dbReference>
<dbReference type="FunFam" id="1.10.287.3240:FF:000027">
    <property type="entry name" value="V-type ATP synthase subunit D"/>
    <property type="match status" value="1"/>
</dbReference>
<dbReference type="Gene3D" id="1.10.287.3240">
    <property type="match status" value="1"/>
</dbReference>
<dbReference type="HAMAP" id="MF_00271">
    <property type="entry name" value="ATP_synth_D_arch"/>
    <property type="match status" value="1"/>
</dbReference>
<dbReference type="InterPro" id="IPR002699">
    <property type="entry name" value="V_ATPase_D"/>
</dbReference>
<dbReference type="NCBIfam" id="TIGR00309">
    <property type="entry name" value="V_ATPase_subD"/>
    <property type="match status" value="1"/>
</dbReference>
<dbReference type="PANTHER" id="PTHR11671">
    <property type="entry name" value="V-TYPE ATP SYNTHASE SUBUNIT D"/>
    <property type="match status" value="1"/>
</dbReference>
<dbReference type="Pfam" id="PF01813">
    <property type="entry name" value="ATP-synt_D"/>
    <property type="match status" value="1"/>
</dbReference>
<evidence type="ECO:0000250" key="1"/>
<evidence type="ECO:0000256" key="2">
    <source>
        <dbReference type="SAM" id="MobiDB-lite"/>
    </source>
</evidence>
<evidence type="ECO:0000305" key="3"/>
<reference key="1">
    <citation type="journal article" date="1999" name="Science">
        <title>Genome sequence of the radioresistant bacterium Deinococcus radiodurans R1.</title>
        <authorList>
            <person name="White O."/>
            <person name="Eisen J.A."/>
            <person name="Heidelberg J.F."/>
            <person name="Hickey E.K."/>
            <person name="Peterson J.D."/>
            <person name="Dodson R.J."/>
            <person name="Haft D.H."/>
            <person name="Gwinn M.L."/>
            <person name="Nelson W.C."/>
            <person name="Richardson D.L."/>
            <person name="Moffat K.S."/>
            <person name="Qin H."/>
            <person name="Jiang L."/>
            <person name="Pamphile W."/>
            <person name="Crosby M."/>
            <person name="Shen M."/>
            <person name="Vamathevan J.J."/>
            <person name="Lam P."/>
            <person name="McDonald L.A."/>
            <person name="Utterback T.R."/>
            <person name="Zalewski C."/>
            <person name="Makarova K.S."/>
            <person name="Aravind L."/>
            <person name="Daly M.J."/>
            <person name="Minton K.W."/>
            <person name="Fleischmann R.D."/>
            <person name="Ketchum K.A."/>
            <person name="Nelson K.E."/>
            <person name="Salzberg S.L."/>
            <person name="Smith H.O."/>
            <person name="Venter J.C."/>
            <person name="Fraser C.M."/>
        </authorList>
    </citation>
    <scope>NUCLEOTIDE SEQUENCE [LARGE SCALE GENOMIC DNA]</scope>
    <source>
        <strain>ATCC 13939 / DSM 20539 / JCM 16871 / CCUG 27074 / LMG 4051 / NBRC 15346 / NCIMB 9279 / VKM B-1422 / R1</strain>
    </source>
</reference>
<gene>
    <name type="primary">atpD</name>
    <name type="ordered locus">DR_0702</name>
</gene>
<keyword id="KW-0066">ATP synthesis</keyword>
<keyword id="KW-0375">Hydrogen ion transport</keyword>
<keyword id="KW-0406">Ion transport</keyword>
<keyword id="KW-1185">Reference proteome</keyword>
<keyword id="KW-0813">Transport</keyword>
<feature type="chain" id="PRO_0000144267" description="V-type ATP synthase subunit D">
    <location>
        <begin position="1"/>
        <end position="224"/>
    </location>
</feature>
<feature type="region of interest" description="Disordered" evidence="2">
    <location>
        <begin position="190"/>
        <end position="224"/>
    </location>
</feature>
<feature type="compositionally biased region" description="Basic and acidic residues" evidence="2">
    <location>
        <begin position="201"/>
        <end position="212"/>
    </location>
</feature>
<feature type="compositionally biased region" description="Low complexity" evidence="2">
    <location>
        <begin position="213"/>
        <end position="224"/>
    </location>
</feature>
<proteinExistence type="inferred from homology"/>
<sequence>MAGQISPTRSALLASKASLKTANGGADLLKRKRDALIGEFFALVKDALAAREQLSSVSKGAYTSLFGAKAWDSPEAVESLSLAGTGDYAVDMQIESIYGVKVPKINIPERAAQADFSPINVGARTIQASNDFGGVLEAIVKVAATETKLRRIGEEIKKTSRRVNALEQVVIPGIHDDIRFIRSVLDQREREAGYTQKKIKAKIEGKNKEAREAAAATSHGSAAD</sequence>
<comment type="function">
    <text evidence="1">Produces ATP from ADP in the presence of a proton gradient across the membrane.</text>
</comment>
<comment type="similarity">
    <text evidence="3">Belongs to the V-ATPase D subunit family.</text>
</comment>
<organism>
    <name type="scientific">Deinococcus radiodurans (strain ATCC 13939 / DSM 20539 / JCM 16871 / CCUG 27074 / LMG 4051 / NBRC 15346 / NCIMB 9279 / VKM B-1422 / R1)</name>
    <dbReference type="NCBI Taxonomy" id="243230"/>
    <lineage>
        <taxon>Bacteria</taxon>
        <taxon>Thermotogati</taxon>
        <taxon>Deinococcota</taxon>
        <taxon>Deinococci</taxon>
        <taxon>Deinococcales</taxon>
        <taxon>Deinococcaceae</taxon>
        <taxon>Deinococcus</taxon>
    </lineage>
</organism>
<protein>
    <recommendedName>
        <fullName>V-type ATP synthase subunit D</fullName>
    </recommendedName>
    <alternativeName>
        <fullName>V-ATPase subunit D</fullName>
    </alternativeName>
</protein>
<accession>Q9RWG6</accession>
<name>VATD_DEIRA</name>